<sequence>MKRTFIMVLDSFGIGASADAKKFGDEGADTLGHIAEACARGEANVGRSGPLTLPNLSRLGLGKAAEESTGTFPVGLDKNADIIGAYGYASELSSGKDTPSGHWEIAGVPVLFDWGYFSDVENSFPQELLDKLVKRANLPGYLGNCHSSGTVILDQLGEEHMKTGKPIFYTSADSVFQIACHEETFGLDRLYELCEIAREELTDGGYNIGRVIARPFIGDKPGHFQRTGNRHDLAVEPPAPTMLKKLVDEKGGEVVSIGKIADIYAQVGITQKVKATGLDALFDATIEEMKKAGDNTIVFTNFVDFDSSYGHRRDVAGYAAALELFDRRLPELMALIKEDDILILTADHGCDPTWPGTDHTREHIPVLVYGPKVKPGSLGHRETFADIGQTVAAYFGLSPMDYGKNML</sequence>
<dbReference type="EC" id="5.4.2.7" evidence="1"/>
<dbReference type="EMBL" id="CP000308">
    <property type="protein sequence ID" value="ABG15807.1"/>
    <property type="molecule type" value="Genomic_DNA"/>
</dbReference>
<dbReference type="RefSeq" id="WP_002209216.1">
    <property type="nucleotide sequence ID" value="NZ_CP009906.1"/>
</dbReference>
<dbReference type="SMR" id="Q1C165"/>
<dbReference type="GeneID" id="57974169"/>
<dbReference type="KEGG" id="ypa:YPA_3845"/>
<dbReference type="UniPathway" id="UPA00002">
    <property type="reaction ID" value="UER00467"/>
</dbReference>
<dbReference type="Proteomes" id="UP000001971">
    <property type="component" value="Chromosome"/>
</dbReference>
<dbReference type="GO" id="GO:0005829">
    <property type="term" value="C:cytosol"/>
    <property type="evidence" value="ECO:0007669"/>
    <property type="project" value="TreeGrafter"/>
</dbReference>
<dbReference type="GO" id="GO:0000287">
    <property type="term" value="F:magnesium ion binding"/>
    <property type="evidence" value="ECO:0007669"/>
    <property type="project" value="InterPro"/>
</dbReference>
<dbReference type="GO" id="GO:0030145">
    <property type="term" value="F:manganese ion binding"/>
    <property type="evidence" value="ECO:0007669"/>
    <property type="project" value="UniProtKB-UniRule"/>
</dbReference>
<dbReference type="GO" id="GO:0008973">
    <property type="term" value="F:phosphopentomutase activity"/>
    <property type="evidence" value="ECO:0007669"/>
    <property type="project" value="UniProtKB-UniRule"/>
</dbReference>
<dbReference type="GO" id="GO:0006018">
    <property type="term" value="P:2-deoxyribose 1-phosphate catabolic process"/>
    <property type="evidence" value="ECO:0007669"/>
    <property type="project" value="UniProtKB-UniRule"/>
</dbReference>
<dbReference type="GO" id="GO:0006015">
    <property type="term" value="P:5-phosphoribose 1-diphosphate biosynthetic process"/>
    <property type="evidence" value="ECO:0007669"/>
    <property type="project" value="UniProtKB-UniPathway"/>
</dbReference>
<dbReference type="GO" id="GO:0043094">
    <property type="term" value="P:metabolic compound salvage"/>
    <property type="evidence" value="ECO:0007669"/>
    <property type="project" value="InterPro"/>
</dbReference>
<dbReference type="GO" id="GO:0009117">
    <property type="term" value="P:nucleotide metabolic process"/>
    <property type="evidence" value="ECO:0007669"/>
    <property type="project" value="InterPro"/>
</dbReference>
<dbReference type="CDD" id="cd16009">
    <property type="entry name" value="PPM"/>
    <property type="match status" value="1"/>
</dbReference>
<dbReference type="FunFam" id="3.30.70.1250:FF:000001">
    <property type="entry name" value="Phosphopentomutase"/>
    <property type="match status" value="1"/>
</dbReference>
<dbReference type="Gene3D" id="3.40.720.10">
    <property type="entry name" value="Alkaline Phosphatase, subunit A"/>
    <property type="match status" value="1"/>
</dbReference>
<dbReference type="Gene3D" id="3.30.70.1250">
    <property type="entry name" value="Phosphopentomutase"/>
    <property type="match status" value="1"/>
</dbReference>
<dbReference type="HAMAP" id="MF_00740">
    <property type="entry name" value="Phosphopentomut"/>
    <property type="match status" value="1"/>
</dbReference>
<dbReference type="InterPro" id="IPR017850">
    <property type="entry name" value="Alkaline_phosphatase_core_sf"/>
</dbReference>
<dbReference type="InterPro" id="IPR010045">
    <property type="entry name" value="DeoB"/>
</dbReference>
<dbReference type="InterPro" id="IPR006124">
    <property type="entry name" value="Metalloenzyme"/>
</dbReference>
<dbReference type="InterPro" id="IPR024052">
    <property type="entry name" value="Phosphopentomutase_DeoB_cap_sf"/>
</dbReference>
<dbReference type="NCBIfam" id="TIGR01696">
    <property type="entry name" value="deoB"/>
    <property type="match status" value="1"/>
</dbReference>
<dbReference type="NCBIfam" id="NF003766">
    <property type="entry name" value="PRK05362.1"/>
    <property type="match status" value="1"/>
</dbReference>
<dbReference type="PANTHER" id="PTHR21110">
    <property type="entry name" value="PHOSPHOPENTOMUTASE"/>
    <property type="match status" value="1"/>
</dbReference>
<dbReference type="PANTHER" id="PTHR21110:SF0">
    <property type="entry name" value="PHOSPHOPENTOMUTASE"/>
    <property type="match status" value="1"/>
</dbReference>
<dbReference type="Pfam" id="PF01676">
    <property type="entry name" value="Metalloenzyme"/>
    <property type="match status" value="1"/>
</dbReference>
<dbReference type="PIRSF" id="PIRSF001491">
    <property type="entry name" value="Ppentomutase"/>
    <property type="match status" value="1"/>
</dbReference>
<dbReference type="SUPFAM" id="SSF53649">
    <property type="entry name" value="Alkaline phosphatase-like"/>
    <property type="match status" value="1"/>
</dbReference>
<dbReference type="SUPFAM" id="SSF143856">
    <property type="entry name" value="DeoB insert domain-like"/>
    <property type="match status" value="1"/>
</dbReference>
<evidence type="ECO:0000255" key="1">
    <source>
        <dbReference type="HAMAP-Rule" id="MF_00740"/>
    </source>
</evidence>
<organism>
    <name type="scientific">Yersinia pestis bv. Antiqua (strain Antiqua)</name>
    <dbReference type="NCBI Taxonomy" id="360102"/>
    <lineage>
        <taxon>Bacteria</taxon>
        <taxon>Pseudomonadati</taxon>
        <taxon>Pseudomonadota</taxon>
        <taxon>Gammaproteobacteria</taxon>
        <taxon>Enterobacterales</taxon>
        <taxon>Yersiniaceae</taxon>
        <taxon>Yersinia</taxon>
    </lineage>
</organism>
<protein>
    <recommendedName>
        <fullName evidence="1">Phosphopentomutase</fullName>
        <ecNumber evidence="1">5.4.2.7</ecNumber>
    </recommendedName>
    <alternativeName>
        <fullName evidence="1">Phosphodeoxyribomutase</fullName>
    </alternativeName>
</protein>
<proteinExistence type="inferred from homology"/>
<feature type="chain" id="PRO_0000258321" description="Phosphopentomutase">
    <location>
        <begin position="1"/>
        <end position="407"/>
    </location>
</feature>
<feature type="binding site" evidence="1">
    <location>
        <position position="10"/>
    </location>
    <ligand>
        <name>Mn(2+)</name>
        <dbReference type="ChEBI" id="CHEBI:29035"/>
        <label>1</label>
    </ligand>
</feature>
<feature type="binding site" evidence="1">
    <location>
        <position position="306"/>
    </location>
    <ligand>
        <name>Mn(2+)</name>
        <dbReference type="ChEBI" id="CHEBI:29035"/>
        <label>2</label>
    </ligand>
</feature>
<feature type="binding site" evidence="1">
    <location>
        <position position="311"/>
    </location>
    <ligand>
        <name>Mn(2+)</name>
        <dbReference type="ChEBI" id="CHEBI:29035"/>
        <label>2</label>
    </ligand>
</feature>
<feature type="binding site" evidence="1">
    <location>
        <position position="347"/>
    </location>
    <ligand>
        <name>Mn(2+)</name>
        <dbReference type="ChEBI" id="CHEBI:29035"/>
        <label>1</label>
    </ligand>
</feature>
<feature type="binding site" evidence="1">
    <location>
        <position position="348"/>
    </location>
    <ligand>
        <name>Mn(2+)</name>
        <dbReference type="ChEBI" id="CHEBI:29035"/>
        <label>1</label>
    </ligand>
</feature>
<feature type="binding site" evidence="1">
    <location>
        <position position="359"/>
    </location>
    <ligand>
        <name>Mn(2+)</name>
        <dbReference type="ChEBI" id="CHEBI:29035"/>
        <label>2</label>
    </ligand>
</feature>
<name>DEOB_YERPA</name>
<reference key="1">
    <citation type="journal article" date="2006" name="J. Bacteriol.">
        <title>Complete genome sequence of Yersinia pestis strains Antiqua and Nepal516: evidence of gene reduction in an emerging pathogen.</title>
        <authorList>
            <person name="Chain P.S.G."/>
            <person name="Hu P."/>
            <person name="Malfatti S.A."/>
            <person name="Radnedge L."/>
            <person name="Larimer F."/>
            <person name="Vergez L.M."/>
            <person name="Worsham P."/>
            <person name="Chu M.C."/>
            <person name="Andersen G.L."/>
        </authorList>
    </citation>
    <scope>NUCLEOTIDE SEQUENCE [LARGE SCALE GENOMIC DNA]</scope>
    <source>
        <strain>Antiqua</strain>
    </source>
</reference>
<gene>
    <name evidence="1" type="primary">deoB</name>
    <name type="ordered locus">YPA_3845</name>
</gene>
<accession>Q1C165</accession>
<keyword id="KW-0963">Cytoplasm</keyword>
<keyword id="KW-0413">Isomerase</keyword>
<keyword id="KW-0464">Manganese</keyword>
<keyword id="KW-0479">Metal-binding</keyword>
<comment type="function">
    <text evidence="1">Isomerase that catalyzes the conversion of deoxy-ribose 1-phosphate (dRib-1-P) and ribose 1-phosphate (Rib-1-P) to deoxy-ribose 5-phosphate (dRib-5-P) and ribose 5-phosphate (Rib-5-P), respectively.</text>
</comment>
<comment type="catalytic activity">
    <reaction evidence="1">
        <text>2-deoxy-alpha-D-ribose 1-phosphate = 2-deoxy-D-ribose 5-phosphate</text>
        <dbReference type="Rhea" id="RHEA:27658"/>
        <dbReference type="ChEBI" id="CHEBI:57259"/>
        <dbReference type="ChEBI" id="CHEBI:62877"/>
        <dbReference type="EC" id="5.4.2.7"/>
    </reaction>
</comment>
<comment type="catalytic activity">
    <reaction evidence="1">
        <text>alpha-D-ribose 1-phosphate = D-ribose 5-phosphate</text>
        <dbReference type="Rhea" id="RHEA:18793"/>
        <dbReference type="ChEBI" id="CHEBI:57720"/>
        <dbReference type="ChEBI" id="CHEBI:78346"/>
        <dbReference type="EC" id="5.4.2.7"/>
    </reaction>
</comment>
<comment type="cofactor">
    <cofactor evidence="1">
        <name>Mn(2+)</name>
        <dbReference type="ChEBI" id="CHEBI:29035"/>
    </cofactor>
    <text evidence="1">Binds 2 manganese ions.</text>
</comment>
<comment type="pathway">
    <text evidence="1">Carbohydrate degradation; 2-deoxy-D-ribose 1-phosphate degradation; D-glyceraldehyde 3-phosphate and acetaldehyde from 2-deoxy-alpha-D-ribose 1-phosphate: step 1/2.</text>
</comment>
<comment type="subcellular location">
    <subcellularLocation>
        <location evidence="1">Cytoplasm</location>
    </subcellularLocation>
</comment>
<comment type="similarity">
    <text evidence="1">Belongs to the phosphopentomutase family.</text>
</comment>